<reference key="1">
    <citation type="journal article" date="2002" name="Proc. Natl. Acad. Sci. U.S.A.">
        <title>Extensive mosaic structure revealed by the complete genome sequence of uropathogenic Escherichia coli.</title>
        <authorList>
            <person name="Welch R.A."/>
            <person name="Burland V."/>
            <person name="Plunkett G. III"/>
            <person name="Redford P."/>
            <person name="Roesch P."/>
            <person name="Rasko D."/>
            <person name="Buckles E.L."/>
            <person name="Liou S.-R."/>
            <person name="Boutin A."/>
            <person name="Hackett J."/>
            <person name="Stroud D."/>
            <person name="Mayhew G.F."/>
            <person name="Rose D.J."/>
            <person name="Zhou S."/>
            <person name="Schwartz D.C."/>
            <person name="Perna N.T."/>
            <person name="Mobley H.L.T."/>
            <person name="Donnenberg M.S."/>
            <person name="Blattner F.R."/>
        </authorList>
    </citation>
    <scope>NUCLEOTIDE SEQUENCE [LARGE SCALE GENOMIC DNA]</scope>
    <source>
        <strain>CFT073 / ATCC 700928 / UPEC</strain>
    </source>
</reference>
<dbReference type="EC" id="4.1.2.4" evidence="1"/>
<dbReference type="EMBL" id="AE014075">
    <property type="protein sequence ID" value="AAN83885.1"/>
    <property type="status" value="ALT_INIT"/>
    <property type="molecule type" value="Genomic_DNA"/>
</dbReference>
<dbReference type="RefSeq" id="WP_001298497.1">
    <property type="nucleotide sequence ID" value="NZ_CP051263.1"/>
</dbReference>
<dbReference type="SMR" id="P0A6L1"/>
<dbReference type="STRING" id="199310.c5465"/>
<dbReference type="GeneID" id="86862495"/>
<dbReference type="KEGG" id="ecc:c5465"/>
<dbReference type="eggNOG" id="COG0274">
    <property type="taxonomic scope" value="Bacteria"/>
</dbReference>
<dbReference type="HOGENOM" id="CLU_053595_3_1_6"/>
<dbReference type="UniPathway" id="UPA00002">
    <property type="reaction ID" value="UER00468"/>
</dbReference>
<dbReference type="Proteomes" id="UP000001410">
    <property type="component" value="Chromosome"/>
</dbReference>
<dbReference type="GO" id="GO:0005737">
    <property type="term" value="C:cytoplasm"/>
    <property type="evidence" value="ECO:0007669"/>
    <property type="project" value="UniProtKB-SubCell"/>
</dbReference>
<dbReference type="GO" id="GO:0004139">
    <property type="term" value="F:deoxyribose-phosphate aldolase activity"/>
    <property type="evidence" value="ECO:0007669"/>
    <property type="project" value="UniProtKB-UniRule"/>
</dbReference>
<dbReference type="GO" id="GO:0006018">
    <property type="term" value="P:2-deoxyribose 1-phosphate catabolic process"/>
    <property type="evidence" value="ECO:0007669"/>
    <property type="project" value="UniProtKB-UniRule"/>
</dbReference>
<dbReference type="GO" id="GO:0016052">
    <property type="term" value="P:carbohydrate catabolic process"/>
    <property type="evidence" value="ECO:0007669"/>
    <property type="project" value="TreeGrafter"/>
</dbReference>
<dbReference type="GO" id="GO:0009264">
    <property type="term" value="P:deoxyribonucleotide catabolic process"/>
    <property type="evidence" value="ECO:0007669"/>
    <property type="project" value="InterPro"/>
</dbReference>
<dbReference type="CDD" id="cd00959">
    <property type="entry name" value="DeoC"/>
    <property type="match status" value="1"/>
</dbReference>
<dbReference type="FunFam" id="3.20.20.70:FF:000034">
    <property type="entry name" value="Deoxyribose-phosphate aldolase"/>
    <property type="match status" value="1"/>
</dbReference>
<dbReference type="Gene3D" id="3.20.20.70">
    <property type="entry name" value="Aldolase class I"/>
    <property type="match status" value="1"/>
</dbReference>
<dbReference type="HAMAP" id="MF_00592">
    <property type="entry name" value="DeoC_type2"/>
    <property type="match status" value="1"/>
</dbReference>
<dbReference type="InterPro" id="IPR013785">
    <property type="entry name" value="Aldolase_TIM"/>
</dbReference>
<dbReference type="InterPro" id="IPR011343">
    <property type="entry name" value="DeoC"/>
</dbReference>
<dbReference type="InterPro" id="IPR002915">
    <property type="entry name" value="DeoC/FbaB/LacD_aldolase"/>
</dbReference>
<dbReference type="InterPro" id="IPR023649">
    <property type="entry name" value="DeoC_typeII"/>
</dbReference>
<dbReference type="NCBIfam" id="TIGR00126">
    <property type="entry name" value="deoC"/>
    <property type="match status" value="1"/>
</dbReference>
<dbReference type="PANTHER" id="PTHR10889">
    <property type="entry name" value="DEOXYRIBOSE-PHOSPHATE ALDOLASE"/>
    <property type="match status" value="1"/>
</dbReference>
<dbReference type="PANTHER" id="PTHR10889:SF3">
    <property type="entry name" value="DEOXYRIBOSE-PHOSPHATE ALDOLASE"/>
    <property type="match status" value="1"/>
</dbReference>
<dbReference type="Pfam" id="PF01791">
    <property type="entry name" value="DeoC"/>
    <property type="match status" value="1"/>
</dbReference>
<dbReference type="PIRSF" id="PIRSF001357">
    <property type="entry name" value="DeoC"/>
    <property type="match status" value="1"/>
</dbReference>
<dbReference type="SMART" id="SM01133">
    <property type="entry name" value="DeoC"/>
    <property type="match status" value="1"/>
</dbReference>
<dbReference type="SUPFAM" id="SSF51569">
    <property type="entry name" value="Aldolase"/>
    <property type="match status" value="1"/>
</dbReference>
<feature type="chain" id="PRO_0000057297" description="Deoxyribose-phosphate aldolase">
    <location>
        <begin position="1"/>
        <end position="259"/>
    </location>
</feature>
<feature type="active site" description="Proton donor/acceptor" evidence="1">
    <location>
        <position position="102"/>
    </location>
</feature>
<feature type="active site" description="Schiff-base intermediate with acetaldehyde" evidence="1">
    <location>
        <position position="167"/>
    </location>
</feature>
<feature type="active site" description="Proton donor/acceptor" evidence="1">
    <location>
        <position position="201"/>
    </location>
</feature>
<evidence type="ECO:0000255" key="1">
    <source>
        <dbReference type="HAMAP-Rule" id="MF_00592"/>
    </source>
</evidence>
<evidence type="ECO:0000305" key="2"/>
<accession>P0A6L1</accession>
<accession>P00882</accession>
<keyword id="KW-0963">Cytoplasm</keyword>
<keyword id="KW-0456">Lyase</keyword>
<keyword id="KW-1185">Reference proteome</keyword>
<keyword id="KW-0704">Schiff base</keyword>
<sequence length="259" mass="27734">MTDLKASSLRALKLMDLTTLNDDDTDEKVIALCHQAKTPVGNTAAICIYPRFIPIARKTLKEQGTPEIRIATVTNFPHGNDDIDIALAETRAAIAYGADEVDVVFPYRALMAGNEQVGFDLVKACKEACAAANVLLKVIIETGELKDEALIRKASEISIKAGADFIKTSTGKVAVNATPESARIMMEVIRDMGVEKTVGFKPAGGVRTAEDAQKYLAIADELFGADWADARHYRFGASSLLASLLKALGHGDGKSASSY</sequence>
<comment type="function">
    <text evidence="1">Catalyzes a reversible aldol reaction between acetaldehyde and D-glyceraldehyde 3-phosphate to generate 2-deoxy-D-ribose 5-phosphate.</text>
</comment>
<comment type="catalytic activity">
    <reaction evidence="1">
        <text>2-deoxy-D-ribose 5-phosphate = D-glyceraldehyde 3-phosphate + acetaldehyde</text>
        <dbReference type="Rhea" id="RHEA:12821"/>
        <dbReference type="ChEBI" id="CHEBI:15343"/>
        <dbReference type="ChEBI" id="CHEBI:59776"/>
        <dbReference type="ChEBI" id="CHEBI:62877"/>
        <dbReference type="EC" id="4.1.2.4"/>
    </reaction>
</comment>
<comment type="pathway">
    <text evidence="1">Carbohydrate degradation; 2-deoxy-D-ribose 1-phosphate degradation; D-glyceraldehyde 3-phosphate and acetaldehyde from 2-deoxy-alpha-D-ribose 1-phosphate: step 2/2.</text>
</comment>
<comment type="subcellular location">
    <subcellularLocation>
        <location evidence="1">Cytoplasm</location>
    </subcellularLocation>
</comment>
<comment type="similarity">
    <text evidence="1 2">Belongs to the DeoC/FbaB aldolase family. DeoC type 2 subfamily.</text>
</comment>
<comment type="sequence caution" evidence="2">
    <conflict type="erroneous initiation">
        <sequence resource="EMBL-CDS" id="AAN83885"/>
    </conflict>
</comment>
<organism>
    <name type="scientific">Escherichia coli O6:H1 (strain CFT073 / ATCC 700928 / UPEC)</name>
    <dbReference type="NCBI Taxonomy" id="199310"/>
    <lineage>
        <taxon>Bacteria</taxon>
        <taxon>Pseudomonadati</taxon>
        <taxon>Pseudomonadota</taxon>
        <taxon>Gammaproteobacteria</taxon>
        <taxon>Enterobacterales</taxon>
        <taxon>Enterobacteriaceae</taxon>
        <taxon>Escherichia</taxon>
    </lineage>
</organism>
<proteinExistence type="inferred from homology"/>
<protein>
    <recommendedName>
        <fullName evidence="1">Deoxyribose-phosphate aldolase</fullName>
        <shortName evidence="1">DERA</shortName>
        <ecNumber evidence="1">4.1.2.4</ecNumber>
    </recommendedName>
    <alternativeName>
        <fullName evidence="1">2-deoxy-D-ribose 5-phosphate aldolase</fullName>
    </alternativeName>
    <alternativeName>
        <fullName evidence="1">Phosphodeoxyriboaldolase</fullName>
        <shortName evidence="1">Deoxyriboaldolase</shortName>
    </alternativeName>
</protein>
<name>DEOC_ECOL6</name>
<gene>
    <name evidence="1" type="primary">deoC</name>
    <name type="synonym">dra</name>
    <name type="synonym">thyR</name>
    <name type="ordered locus">c5465</name>
</gene>